<sequence length="33" mass="3564">MLITLGWASLAALFSFSIAMVVWGRNGDGSMNF</sequence>
<comment type="function">
    <text evidence="2">Component of the cytochrome b6-f complex, which mediates electron transfer between photosystem II (PSII) and photosystem I (PSI), cyclic electron flow around PSI, and state transitions.</text>
</comment>
<comment type="subunit">
    <text evidence="2">The 4 large subunits of the cytochrome b6-f complex are cytochrome b6, subunit IV (17 kDa polypeptide, PetD), cytochrome f and the Rieske protein, while the 4 small subunits are PetG, PetL, PetM and PetN. The complex functions as a dimer.</text>
</comment>
<comment type="subcellular location">
    <subcellularLocation>
        <location evidence="1">Plastid</location>
        <location evidence="1">Organellar chromatophore thylakoid membrane</location>
        <topology evidence="2">Single-pass membrane protein</topology>
    </subcellularLocation>
</comment>
<comment type="similarity">
    <text evidence="2">Belongs to the PetN family.</text>
</comment>
<feature type="chain" id="PRO_0000355462" description="Cytochrome b6-f complex subunit 8">
    <location>
        <begin position="1"/>
        <end position="33"/>
    </location>
</feature>
<feature type="transmembrane region" description="Helical" evidence="2">
    <location>
        <begin position="2"/>
        <end position="22"/>
    </location>
</feature>
<evidence type="ECO:0000250" key="1"/>
<evidence type="ECO:0000255" key="2">
    <source>
        <dbReference type="HAMAP-Rule" id="MF_00395"/>
    </source>
</evidence>
<geneLocation type="organellar chromatophore"/>
<reference key="1">
    <citation type="journal article" date="2008" name="Curr. Biol.">
        <title>Chromatophore genome sequence of Paulinella sheds light on acquisition of photosynthesis by eukaryotes.</title>
        <authorList>
            <person name="Nowack E.C.M."/>
            <person name="Melkonian M."/>
            <person name="Gloeckner G."/>
        </authorList>
    </citation>
    <scope>NUCLEOTIDE SEQUENCE [LARGE SCALE GENOMIC DNA]</scope>
</reference>
<dbReference type="EMBL" id="CP000815">
    <property type="protein sequence ID" value="ACB42627.1"/>
    <property type="molecule type" value="Genomic_DNA"/>
</dbReference>
<dbReference type="RefSeq" id="YP_002048837.1">
    <property type="nucleotide sequence ID" value="NC_011087.1"/>
</dbReference>
<dbReference type="SMR" id="B1X3V8"/>
<dbReference type="GeneID" id="6482013"/>
<dbReference type="GO" id="GO:0009512">
    <property type="term" value="C:cytochrome b6f complex"/>
    <property type="evidence" value="ECO:0007669"/>
    <property type="project" value="InterPro"/>
</dbReference>
<dbReference type="GO" id="GO:0070118">
    <property type="term" value="C:organellar chromatophore thylakoid membrane"/>
    <property type="evidence" value="ECO:0007669"/>
    <property type="project" value="UniProtKB-SubCell"/>
</dbReference>
<dbReference type="GO" id="GO:0009536">
    <property type="term" value="C:plastid"/>
    <property type="evidence" value="ECO:0007669"/>
    <property type="project" value="UniProtKB-KW"/>
</dbReference>
<dbReference type="GO" id="GO:0045158">
    <property type="term" value="F:electron transporter, transferring electrons within cytochrome b6/f complex of photosystem II activity"/>
    <property type="evidence" value="ECO:0007669"/>
    <property type="project" value="InterPro"/>
</dbReference>
<dbReference type="GO" id="GO:0017004">
    <property type="term" value="P:cytochrome complex assembly"/>
    <property type="evidence" value="ECO:0007669"/>
    <property type="project" value="UniProtKB-UniRule"/>
</dbReference>
<dbReference type="GO" id="GO:0015979">
    <property type="term" value="P:photosynthesis"/>
    <property type="evidence" value="ECO:0007669"/>
    <property type="project" value="UniProtKB-KW"/>
</dbReference>
<dbReference type="HAMAP" id="MF_00395">
    <property type="entry name" value="Cytb6_f_PetN"/>
    <property type="match status" value="1"/>
</dbReference>
<dbReference type="InterPro" id="IPR036143">
    <property type="entry name" value="Cytochr_b6-f_cplx_su8_sf"/>
</dbReference>
<dbReference type="InterPro" id="IPR005497">
    <property type="entry name" value="Cytochrome_b6-f_cplx_su8"/>
</dbReference>
<dbReference type="NCBIfam" id="NF002709">
    <property type="entry name" value="PRK02529.1"/>
    <property type="match status" value="1"/>
</dbReference>
<dbReference type="Pfam" id="PF03742">
    <property type="entry name" value="PetN"/>
    <property type="match status" value="1"/>
</dbReference>
<dbReference type="SUPFAM" id="SSF103451">
    <property type="entry name" value="PetN subunit of the cytochrome b6f complex"/>
    <property type="match status" value="1"/>
</dbReference>
<keyword id="KW-0249">Electron transport</keyword>
<keyword id="KW-0472">Membrane</keyword>
<keyword id="KW-0994">Organellar chromatophore</keyword>
<keyword id="KW-0602">Photosynthesis</keyword>
<keyword id="KW-0934">Plastid</keyword>
<keyword id="KW-0793">Thylakoid</keyword>
<keyword id="KW-0812">Transmembrane</keyword>
<keyword id="KW-1133">Transmembrane helix</keyword>
<keyword id="KW-0813">Transport</keyword>
<gene>
    <name evidence="2" type="primary">petN</name>
    <name type="ordered locus">PCC_0177</name>
</gene>
<accession>B1X3V8</accession>
<protein>
    <recommendedName>
        <fullName evidence="2">Cytochrome b6-f complex subunit 8</fullName>
    </recommendedName>
    <alternativeName>
        <fullName evidence="2">Cytochrome b6-f complex subunit PetN</fullName>
    </alternativeName>
    <alternativeName>
        <fullName evidence="2">Cytochrome b6-f complex subunit VIII</fullName>
    </alternativeName>
</protein>
<proteinExistence type="inferred from homology"/>
<organism>
    <name type="scientific">Paulinella chromatophora</name>
    <dbReference type="NCBI Taxonomy" id="39717"/>
    <lineage>
        <taxon>Eukaryota</taxon>
        <taxon>Sar</taxon>
        <taxon>Rhizaria</taxon>
        <taxon>Cercozoa</taxon>
        <taxon>Imbricatea</taxon>
        <taxon>Silicofilosea</taxon>
        <taxon>Euglyphida</taxon>
        <taxon>Paulinellidae</taxon>
        <taxon>Paulinella</taxon>
    </lineage>
</organism>
<name>PETN_PAUCH</name>